<feature type="chain" id="PRO_1000166340" description="Large ribosomal subunit protein uL16">
    <location>
        <begin position="1"/>
        <end position="144"/>
    </location>
</feature>
<feature type="region of interest" description="Disordered" evidence="2">
    <location>
        <begin position="1"/>
        <end position="22"/>
    </location>
</feature>
<feature type="compositionally biased region" description="Basic residues" evidence="2">
    <location>
        <begin position="1"/>
        <end position="16"/>
    </location>
</feature>
<keyword id="KW-1185">Reference proteome</keyword>
<keyword id="KW-0687">Ribonucleoprotein</keyword>
<keyword id="KW-0689">Ribosomal protein</keyword>
<keyword id="KW-0694">RNA-binding</keyword>
<keyword id="KW-0699">rRNA-binding</keyword>
<keyword id="KW-0820">tRNA-binding</keyword>
<dbReference type="EMBL" id="AP008955">
    <property type="protein sequence ID" value="BAH41205.1"/>
    <property type="molecule type" value="Genomic_DNA"/>
</dbReference>
<dbReference type="RefSeq" id="WP_007716249.1">
    <property type="nucleotide sequence ID" value="NC_012491.1"/>
</dbReference>
<dbReference type="SMR" id="C0ZII7"/>
<dbReference type="STRING" id="358681.BBR47_02280"/>
<dbReference type="GeneID" id="95752108"/>
<dbReference type="KEGG" id="bbe:BBR47_02280"/>
<dbReference type="eggNOG" id="COG0197">
    <property type="taxonomic scope" value="Bacteria"/>
</dbReference>
<dbReference type="HOGENOM" id="CLU_078858_2_1_9"/>
<dbReference type="Proteomes" id="UP000001877">
    <property type="component" value="Chromosome"/>
</dbReference>
<dbReference type="GO" id="GO:0022625">
    <property type="term" value="C:cytosolic large ribosomal subunit"/>
    <property type="evidence" value="ECO:0007669"/>
    <property type="project" value="TreeGrafter"/>
</dbReference>
<dbReference type="GO" id="GO:0019843">
    <property type="term" value="F:rRNA binding"/>
    <property type="evidence" value="ECO:0007669"/>
    <property type="project" value="UniProtKB-UniRule"/>
</dbReference>
<dbReference type="GO" id="GO:0003735">
    <property type="term" value="F:structural constituent of ribosome"/>
    <property type="evidence" value="ECO:0007669"/>
    <property type="project" value="InterPro"/>
</dbReference>
<dbReference type="GO" id="GO:0000049">
    <property type="term" value="F:tRNA binding"/>
    <property type="evidence" value="ECO:0007669"/>
    <property type="project" value="UniProtKB-KW"/>
</dbReference>
<dbReference type="GO" id="GO:0006412">
    <property type="term" value="P:translation"/>
    <property type="evidence" value="ECO:0007669"/>
    <property type="project" value="UniProtKB-UniRule"/>
</dbReference>
<dbReference type="CDD" id="cd01433">
    <property type="entry name" value="Ribosomal_L16_L10e"/>
    <property type="match status" value="1"/>
</dbReference>
<dbReference type="FunFam" id="3.90.1170.10:FF:000001">
    <property type="entry name" value="50S ribosomal protein L16"/>
    <property type="match status" value="1"/>
</dbReference>
<dbReference type="Gene3D" id="3.90.1170.10">
    <property type="entry name" value="Ribosomal protein L10e/L16"/>
    <property type="match status" value="1"/>
</dbReference>
<dbReference type="HAMAP" id="MF_01342">
    <property type="entry name" value="Ribosomal_uL16"/>
    <property type="match status" value="1"/>
</dbReference>
<dbReference type="InterPro" id="IPR047873">
    <property type="entry name" value="Ribosomal_uL16"/>
</dbReference>
<dbReference type="InterPro" id="IPR000114">
    <property type="entry name" value="Ribosomal_uL16_bact-type"/>
</dbReference>
<dbReference type="InterPro" id="IPR020798">
    <property type="entry name" value="Ribosomal_uL16_CS"/>
</dbReference>
<dbReference type="InterPro" id="IPR016180">
    <property type="entry name" value="Ribosomal_uL16_dom"/>
</dbReference>
<dbReference type="InterPro" id="IPR036920">
    <property type="entry name" value="Ribosomal_uL16_sf"/>
</dbReference>
<dbReference type="NCBIfam" id="TIGR01164">
    <property type="entry name" value="rplP_bact"/>
    <property type="match status" value="1"/>
</dbReference>
<dbReference type="PANTHER" id="PTHR12220">
    <property type="entry name" value="50S/60S RIBOSOMAL PROTEIN L16"/>
    <property type="match status" value="1"/>
</dbReference>
<dbReference type="PANTHER" id="PTHR12220:SF13">
    <property type="entry name" value="LARGE RIBOSOMAL SUBUNIT PROTEIN UL16M"/>
    <property type="match status" value="1"/>
</dbReference>
<dbReference type="Pfam" id="PF00252">
    <property type="entry name" value="Ribosomal_L16"/>
    <property type="match status" value="1"/>
</dbReference>
<dbReference type="PRINTS" id="PR00060">
    <property type="entry name" value="RIBOSOMALL16"/>
</dbReference>
<dbReference type="SUPFAM" id="SSF54686">
    <property type="entry name" value="Ribosomal protein L16p/L10e"/>
    <property type="match status" value="1"/>
</dbReference>
<dbReference type="PROSITE" id="PS00586">
    <property type="entry name" value="RIBOSOMAL_L16_1"/>
    <property type="match status" value="1"/>
</dbReference>
<dbReference type="PROSITE" id="PS00701">
    <property type="entry name" value="RIBOSOMAL_L16_2"/>
    <property type="match status" value="1"/>
</dbReference>
<comment type="function">
    <text evidence="1">Binds 23S rRNA and is also seen to make contacts with the A and possibly P site tRNAs.</text>
</comment>
<comment type="subunit">
    <text evidence="1">Part of the 50S ribosomal subunit.</text>
</comment>
<comment type="similarity">
    <text evidence="1">Belongs to the universal ribosomal protein uL16 family.</text>
</comment>
<evidence type="ECO:0000255" key="1">
    <source>
        <dbReference type="HAMAP-Rule" id="MF_01342"/>
    </source>
</evidence>
<evidence type="ECO:0000256" key="2">
    <source>
        <dbReference type="SAM" id="MobiDB-lite"/>
    </source>
</evidence>
<evidence type="ECO:0000305" key="3"/>
<accession>C0ZII7</accession>
<reference key="1">
    <citation type="submission" date="2005-03" db="EMBL/GenBank/DDBJ databases">
        <title>Brevibacillus brevis strain 47, complete genome.</title>
        <authorList>
            <person name="Hosoyama A."/>
            <person name="Yamada R."/>
            <person name="Hongo Y."/>
            <person name="Terui Y."/>
            <person name="Ankai A."/>
            <person name="Masuyama W."/>
            <person name="Sekiguchi M."/>
            <person name="Takeda T."/>
            <person name="Asano K."/>
            <person name="Ohji S."/>
            <person name="Ichikawa N."/>
            <person name="Narita S."/>
            <person name="Aoki N."/>
            <person name="Miura H."/>
            <person name="Matsushita S."/>
            <person name="Sekigawa T."/>
            <person name="Yamagata H."/>
            <person name="Yoshikawa H."/>
            <person name="Udaka S."/>
            <person name="Tanikawa S."/>
            <person name="Fujita N."/>
        </authorList>
    </citation>
    <scope>NUCLEOTIDE SEQUENCE [LARGE SCALE GENOMIC DNA]</scope>
    <source>
        <strain>47 / JCM 6285 / NBRC 100599</strain>
    </source>
</reference>
<proteinExistence type="inferred from homology"/>
<name>RL16_BREBN</name>
<sequence>MLTPKRVKHRKQHRGKMAGNAKGGTTVAFGEYGLQAMEPSWVTNRQIEAARIAMTRYIKRGGKVWIKIFPDKPVTQKPLEVRMGSGKGSPEKWVAVVKPGKIMFELAGVPEEVAREAMRLAMHKLPIKCKFVKREEVGGDAHEG</sequence>
<organism>
    <name type="scientific">Brevibacillus brevis (strain 47 / JCM 6285 / NBRC 100599)</name>
    <dbReference type="NCBI Taxonomy" id="358681"/>
    <lineage>
        <taxon>Bacteria</taxon>
        <taxon>Bacillati</taxon>
        <taxon>Bacillota</taxon>
        <taxon>Bacilli</taxon>
        <taxon>Bacillales</taxon>
        <taxon>Paenibacillaceae</taxon>
        <taxon>Brevibacillus</taxon>
    </lineage>
</organism>
<gene>
    <name evidence="1" type="primary">rplP</name>
    <name type="ordered locus">BBR47_02280</name>
</gene>
<protein>
    <recommendedName>
        <fullName evidence="1">Large ribosomal subunit protein uL16</fullName>
    </recommendedName>
    <alternativeName>
        <fullName evidence="3">50S ribosomal protein L16</fullName>
    </alternativeName>
</protein>